<feature type="chain" id="PRO_0000158083" description="Reverse gyrase">
    <location>
        <begin position="1"/>
        <end position="1117"/>
    </location>
</feature>
<feature type="domain" description="Helicase ATP-binding" evidence="1">
    <location>
        <begin position="88"/>
        <end position="284"/>
    </location>
</feature>
<feature type="domain" description="Toprim" evidence="1">
    <location>
        <begin position="555"/>
        <end position="712"/>
    </location>
</feature>
<feature type="domain" description="Topo IA-type catalytic" evidence="4">
    <location>
        <begin position="728"/>
        <end position="1114"/>
    </location>
</feature>
<feature type="zinc finger region" description="RG N-terminal-type" evidence="2">
    <location>
        <begin position="3"/>
        <end position="42"/>
    </location>
</feature>
<feature type="zinc finger region" description="RG C-terminal-type" evidence="3">
    <location>
        <begin position="631"/>
        <end position="658"/>
    </location>
</feature>
<feature type="region of interest" description="Topoisomerase I" evidence="1">
    <location>
        <begin position="551"/>
        <end position="1117"/>
    </location>
</feature>
<feature type="short sequence motif" description="DEAD box" evidence="1">
    <location>
        <begin position="206"/>
        <end position="209"/>
    </location>
</feature>
<feature type="active site" description="O-(5'-phospho-DNA)-tyrosine intermediate" evidence="4 7">
    <location>
        <position position="864"/>
    </location>
</feature>
<feature type="binding site" evidence="1">
    <location>
        <position position="13"/>
    </location>
    <ligand>
        <name>Zn(2+)</name>
        <dbReference type="ChEBI" id="CHEBI:29105"/>
        <label>1</label>
    </ligand>
</feature>
<feature type="binding site" evidence="1">
    <location>
        <position position="16"/>
    </location>
    <ligand>
        <name>Zn(2+)</name>
        <dbReference type="ChEBI" id="CHEBI:29105"/>
        <label>1</label>
    </ligand>
</feature>
<feature type="binding site" evidence="1">
    <location>
        <position position="31"/>
    </location>
    <ligand>
        <name>Zn(2+)</name>
        <dbReference type="ChEBI" id="CHEBI:29105"/>
        <label>1</label>
    </ligand>
</feature>
<feature type="binding site" evidence="1">
    <location>
        <position position="34"/>
    </location>
    <ligand>
        <name>Zn(2+)</name>
        <dbReference type="ChEBI" id="CHEBI:29105"/>
        <label>1</label>
    </ligand>
</feature>
<feature type="binding site" evidence="1">
    <location>
        <position position="84"/>
    </location>
    <ligand>
        <name>ATP</name>
        <dbReference type="ChEBI" id="CHEBI:30616"/>
    </ligand>
</feature>
<feature type="binding site" evidence="1">
    <location>
        <begin position="101"/>
        <end position="108"/>
    </location>
    <ligand>
        <name>ATP</name>
        <dbReference type="ChEBI" id="CHEBI:30616"/>
    </ligand>
</feature>
<feature type="binding site" evidence="1">
    <location>
        <position position="561"/>
    </location>
    <ligand>
        <name>Mg(2+)</name>
        <dbReference type="ChEBI" id="CHEBI:18420"/>
        <note>catalytic</note>
    </ligand>
</feature>
<feature type="binding site" evidence="1">
    <location>
        <position position="634"/>
    </location>
    <ligand>
        <name>Zn(2+)</name>
        <dbReference type="ChEBI" id="CHEBI:29105"/>
        <label>2</label>
    </ligand>
</feature>
<feature type="binding site" evidence="1">
    <location>
        <position position="637"/>
    </location>
    <ligand>
        <name>Zn(2+)</name>
        <dbReference type="ChEBI" id="CHEBI:29105"/>
        <label>2</label>
    </ligand>
</feature>
<feature type="binding site" evidence="1">
    <location>
        <position position="648"/>
    </location>
    <ligand>
        <name>Zn(2+)</name>
        <dbReference type="ChEBI" id="CHEBI:29105"/>
        <label>2</label>
    </ligand>
</feature>
<feature type="binding site" evidence="1">
    <location>
        <position position="651"/>
    </location>
    <ligand>
        <name>Zn(2+)</name>
        <dbReference type="ChEBI" id="CHEBI:29105"/>
        <label>2</label>
    </ligand>
</feature>
<feature type="binding site" evidence="1">
    <location>
        <position position="681"/>
    </location>
    <ligand>
        <name>Mg(2+)</name>
        <dbReference type="ChEBI" id="CHEBI:18420"/>
        <note>catalytic</note>
    </ligand>
</feature>
<feature type="mutagenesis site" description="Loss of positive supercoiling activity, still relaxes negative supercoils, very weak DNA-binding, protein is unstable at 75 degrees Celsius." evidence="5">
    <location>
        <begin position="1"/>
        <end position="34"/>
    </location>
</feature>
<feature type="mutagenesis site" description="Loss of positive supercoiling activity, still relaxes negative supercoils, significant loss of DNA-binding at 75 degrees Celsius, strongly decreased ATPase." evidence="5">
    <location>
        <begin position="214"/>
        <end position="267"/>
    </location>
</feature>
<feature type="mutagenesis site" description="Loss of positive supercoiling activity, still relaxes negative supercoils, improved DNA-binding, nearly complete loss of ATPase." evidence="5">
    <location>
        <begin position="394"/>
        <end position="477"/>
    </location>
</feature>
<feature type="mutagenesis site" description="Loss of positive supercoiling activity, still relaxes negative supercoils, very weak DNA-binding, protein is unstable at 75 degrees Celsius." evidence="5">
    <original>CSSCGAQFTDELPRCPYC</original>
    <variation>ASSAGAQFTDELPRAPYA</variation>
    <location>
        <begin position="634"/>
        <end position="651"/>
    </location>
</feature>
<feature type="mutagenesis site" description="Loss of positive supercoiling activity, does not relax negative supercoils." evidence="5">
    <original>Y</original>
    <variation>F</variation>
    <location>
        <position position="864"/>
    </location>
</feature>
<gene>
    <name evidence="1" type="primary">rgy</name>
    <name type="ordered locus">TTE1745</name>
</gene>
<evidence type="ECO:0000255" key="1">
    <source>
        <dbReference type="HAMAP-Rule" id="MF_01125"/>
    </source>
</evidence>
<evidence type="ECO:0000255" key="2">
    <source>
        <dbReference type="PROSITE-ProRule" id="PRU01380"/>
    </source>
</evidence>
<evidence type="ECO:0000255" key="3">
    <source>
        <dbReference type="PROSITE-ProRule" id="PRU01381"/>
    </source>
</evidence>
<evidence type="ECO:0000255" key="4">
    <source>
        <dbReference type="PROSITE-ProRule" id="PRU01383"/>
    </source>
</evidence>
<evidence type="ECO:0000269" key="5">
    <source>
    </source>
</evidence>
<evidence type="ECO:0000303" key="6">
    <source>
    </source>
</evidence>
<evidence type="ECO:0000305" key="7">
    <source>
    </source>
</evidence>
<proteinExistence type="evidence at protein level"/>
<accession>Q8R979</accession>
<organism>
    <name type="scientific">Caldanaerobacter subterraneus subsp. tengcongensis (strain DSM 15242 / JCM 11007 / NBRC 100824 / MB4)</name>
    <name type="common">Thermoanaerobacter tengcongensis</name>
    <dbReference type="NCBI Taxonomy" id="273068"/>
    <lineage>
        <taxon>Bacteria</taxon>
        <taxon>Bacillati</taxon>
        <taxon>Bacillota</taxon>
        <taxon>Clostridia</taxon>
        <taxon>Thermoanaerobacterales</taxon>
        <taxon>Thermoanaerobacteraceae</taxon>
        <taxon>Caldanaerobacter</taxon>
    </lineage>
</organism>
<comment type="function">
    <text evidence="5 7">Modifies the topological state of DNA by introducing positive supercoils in an ATP-dependent process, increasing the linking number in steps of +1; also positively supercoils with dATP and ATP-gamma-S (PubMed:21318561). With UTP or dTTP relaxes negatively supercoiled DNA, in the absence of any nucleotide partially relaxes negative supercoils (PubMed:21318561). In the absence of nucleotide has a higher affinity for dsDNA with a single-stranded tail than dsDNA or ssDNA (PubMed:21318561). Has an ATPase activity in the absence of DNA (PubMed:21318561). Binds to single-stranded DNA, transiently cleaves and then rejoins the ends, introducing a positive supercoil in the process (Probable) (PubMed:21318561). The scissile phosphodiester is attacked by the catalytic tyrosine of the enzyme, resulting in the formation of a DNA-(5'-phosphotyrosyl)-enzyme intermediate (Probable) (PubMed:21318561). Probably involved in rewinding DNA strands in regions of the chromosome that have opened up to allow replication, transcription, DNA repair and/or for DNA protection.</text>
</comment>
<comment type="catalytic activity">
    <reaction evidence="1 5">
        <text>ATP + H2O = ADP + phosphate + H(+)</text>
        <dbReference type="Rhea" id="RHEA:13065"/>
        <dbReference type="ChEBI" id="CHEBI:15377"/>
        <dbReference type="ChEBI" id="CHEBI:15378"/>
        <dbReference type="ChEBI" id="CHEBI:30616"/>
        <dbReference type="ChEBI" id="CHEBI:43474"/>
        <dbReference type="ChEBI" id="CHEBI:456216"/>
    </reaction>
</comment>
<comment type="cofactor">
    <cofactor evidence="1">
        <name>Zn(2+)</name>
        <dbReference type="ChEBI" id="CHEBI:29105"/>
    </cofactor>
    <text evidence="1">Binds 2 zinc ions per subunit.</text>
</comment>
<comment type="cofactor">
    <cofactor evidence="1">
        <name>Mg(2+)</name>
        <dbReference type="ChEBI" id="CHEBI:18420"/>
    </cofactor>
</comment>
<comment type="biophysicochemical properties">
    <temperatureDependence>
        <text evidence="5">Optimum temperature is 75 degrees Celsius for positive supercoiling (PubMed:21318561). Optimum temperature is 60 degrees Celsius for ATPase (PubMed:21318561). No supercoiling is seen below 50 degrees Celsius (PubMed:21318561).</text>
    </temperatureDependence>
</comment>
<comment type="subunit">
    <text evidence="1">Monomer.</text>
</comment>
<comment type="subcellular location">
    <subcellularLocation>
        <location evidence="1">Cytoplasm</location>
    </subcellularLocation>
</comment>
<comment type="domain">
    <text evidence="1">Introduction of positive supercoils requires the cooperation of both domains. The helicase-like domain probably does not directly unwind DNA, but more likely acts by driving ATP-dependent conformational changes within the whole enzyme. A beta hairpin in the 'latch' region of the N-terminal domain plays a regulatory role in the enzyme, repressing topoisomerase activity in the absence of ATP and preventing the enzyme from acting as an ATP-independent relaxing enzyme; it also helps to coordinate nucleotide hydrolysis by the ATPase domain with the supercoiling activity of the topoisomerase domain.</text>
</comment>
<comment type="miscellaneous">
    <text evidence="1">This enzyme is the only unique feature of hyperthermophilic bacteria/archaea known and seems to be essential for adaptation to life at high temperatures. It may play a role in stabilization of DNA at high temperatures.</text>
</comment>
<comment type="similarity">
    <text evidence="1">In the N-terminal section; belongs to the DEAD box helicase family. DDVD subfamily.</text>
</comment>
<comment type="similarity">
    <text evidence="1">In the C-terminal section; belongs to the type IA topoisomerase family.</text>
</comment>
<protein>
    <recommendedName>
        <fullName evidence="1">Reverse gyrase</fullName>
        <shortName evidence="6">TtRG</shortName>
        <ecNumber evidence="1 5">5.6.2.-</ecNumber>
    </recommendedName>
</protein>
<name>RGYR_CALS4</name>
<dbReference type="EC" id="5.6.2.-" evidence="1 5"/>
<dbReference type="EMBL" id="AE008691">
    <property type="protein sequence ID" value="AAM24939.1"/>
    <property type="molecule type" value="Genomic_DNA"/>
</dbReference>
<dbReference type="RefSeq" id="WP_011025941.1">
    <property type="nucleotide sequence ID" value="NC_003869.1"/>
</dbReference>
<dbReference type="SMR" id="Q8R979"/>
<dbReference type="STRING" id="273068.TTE1745"/>
<dbReference type="KEGG" id="tte:TTE1745"/>
<dbReference type="eggNOG" id="COG1110">
    <property type="taxonomic scope" value="Bacteria"/>
</dbReference>
<dbReference type="HOGENOM" id="CLU_002886_0_0_9"/>
<dbReference type="OrthoDB" id="9804262at2"/>
<dbReference type="Proteomes" id="UP000000555">
    <property type="component" value="Chromosome"/>
</dbReference>
<dbReference type="GO" id="GO:0005737">
    <property type="term" value="C:cytoplasm"/>
    <property type="evidence" value="ECO:0007669"/>
    <property type="project" value="UniProtKB-SubCell"/>
</dbReference>
<dbReference type="GO" id="GO:0005524">
    <property type="term" value="F:ATP binding"/>
    <property type="evidence" value="ECO:0007669"/>
    <property type="project" value="UniProtKB-UniRule"/>
</dbReference>
<dbReference type="GO" id="GO:0016887">
    <property type="term" value="F:ATP hydrolysis activity"/>
    <property type="evidence" value="ECO:0007669"/>
    <property type="project" value="RHEA"/>
</dbReference>
<dbReference type="GO" id="GO:0003677">
    <property type="term" value="F:DNA binding"/>
    <property type="evidence" value="ECO:0007669"/>
    <property type="project" value="UniProtKB-UniRule"/>
</dbReference>
<dbReference type="GO" id="GO:0003918">
    <property type="term" value="F:DNA topoisomerase type II (double strand cut, ATP-hydrolyzing) activity"/>
    <property type="evidence" value="ECO:0007669"/>
    <property type="project" value="UniProtKB-EC"/>
</dbReference>
<dbReference type="GO" id="GO:0160097">
    <property type="term" value="F:reverse gyrase activity"/>
    <property type="evidence" value="ECO:0000314"/>
    <property type="project" value="UniProtKB"/>
</dbReference>
<dbReference type="GO" id="GO:0008270">
    <property type="term" value="F:zinc ion binding"/>
    <property type="evidence" value="ECO:0000315"/>
    <property type="project" value="UniProtKB"/>
</dbReference>
<dbReference type="GO" id="GO:0006265">
    <property type="term" value="P:DNA topological change"/>
    <property type="evidence" value="ECO:0000314"/>
    <property type="project" value="UniProtKB"/>
</dbReference>
<dbReference type="CDD" id="cd17924">
    <property type="entry name" value="DDXDc_reverse_gyrase"/>
    <property type="match status" value="1"/>
</dbReference>
<dbReference type="CDD" id="cd18798">
    <property type="entry name" value="SF2_C_reverse_gyrase"/>
    <property type="match status" value="1"/>
</dbReference>
<dbReference type="CDD" id="cd00186">
    <property type="entry name" value="TOP1Ac"/>
    <property type="match status" value="1"/>
</dbReference>
<dbReference type="CDD" id="cd03361">
    <property type="entry name" value="TOPRIM_TopoIA_RevGyr"/>
    <property type="match status" value="1"/>
</dbReference>
<dbReference type="Gene3D" id="2.60.510.20">
    <property type="match status" value="1"/>
</dbReference>
<dbReference type="Gene3D" id="3.40.50.140">
    <property type="match status" value="1"/>
</dbReference>
<dbReference type="Gene3D" id="3.40.50.300">
    <property type="entry name" value="P-loop containing nucleotide triphosphate hydrolases"/>
    <property type="match status" value="3"/>
</dbReference>
<dbReference type="Gene3D" id="1.10.460.10">
    <property type="entry name" value="Topoisomerase I, domain 2"/>
    <property type="match status" value="1"/>
</dbReference>
<dbReference type="Gene3D" id="1.10.290.10">
    <property type="entry name" value="Topoisomerase I, domain 4"/>
    <property type="match status" value="1"/>
</dbReference>
<dbReference type="HAMAP" id="MF_01125">
    <property type="entry name" value="Reverse_gyrase"/>
    <property type="match status" value="1"/>
</dbReference>
<dbReference type="InterPro" id="IPR011545">
    <property type="entry name" value="DEAD/DEAH_box_helicase_dom"/>
</dbReference>
<dbReference type="InterPro" id="IPR014001">
    <property type="entry name" value="Helicase_ATP-bd"/>
</dbReference>
<dbReference type="InterPro" id="IPR027417">
    <property type="entry name" value="P-loop_NTPase"/>
</dbReference>
<dbReference type="InterPro" id="IPR005736">
    <property type="entry name" value="Reverse_gyrase"/>
</dbReference>
<dbReference type="InterPro" id="IPR003601">
    <property type="entry name" value="Topo_IA_2"/>
</dbReference>
<dbReference type="InterPro" id="IPR013497">
    <property type="entry name" value="Topo_IA_cen"/>
</dbReference>
<dbReference type="InterPro" id="IPR013824">
    <property type="entry name" value="Topo_IA_cen_sub1"/>
</dbReference>
<dbReference type="InterPro" id="IPR013826">
    <property type="entry name" value="Topo_IA_cen_sub3"/>
</dbReference>
<dbReference type="InterPro" id="IPR023405">
    <property type="entry name" value="Topo_IA_core_domain"/>
</dbReference>
<dbReference type="InterPro" id="IPR003602">
    <property type="entry name" value="Topo_IA_DNA-bd_dom"/>
</dbReference>
<dbReference type="InterPro" id="IPR006171">
    <property type="entry name" value="TOPRIM_dom"/>
</dbReference>
<dbReference type="InterPro" id="IPR034142">
    <property type="entry name" value="TOPRIM_RevGyr"/>
</dbReference>
<dbReference type="InterPro" id="IPR040569">
    <property type="entry name" value="Znf_Rg"/>
</dbReference>
<dbReference type="NCBIfam" id="TIGR01054">
    <property type="entry name" value="rgy"/>
    <property type="match status" value="1"/>
</dbReference>
<dbReference type="PANTHER" id="PTHR43505">
    <property type="entry name" value="REVERSE GYRASE"/>
    <property type="match status" value="1"/>
</dbReference>
<dbReference type="PANTHER" id="PTHR43505:SF1">
    <property type="entry name" value="REVERSE GYRASE"/>
    <property type="match status" value="1"/>
</dbReference>
<dbReference type="Pfam" id="PF00270">
    <property type="entry name" value="DEAD"/>
    <property type="match status" value="1"/>
</dbReference>
<dbReference type="Pfam" id="PF01131">
    <property type="entry name" value="Topoisom_bac"/>
    <property type="match status" value="1"/>
</dbReference>
<dbReference type="Pfam" id="PF01751">
    <property type="entry name" value="Toprim"/>
    <property type="match status" value="1"/>
</dbReference>
<dbReference type="Pfam" id="PF17915">
    <property type="entry name" value="zf_Rg"/>
    <property type="match status" value="1"/>
</dbReference>
<dbReference type="PRINTS" id="PR00417">
    <property type="entry name" value="PRTPISMRASEI"/>
</dbReference>
<dbReference type="SMART" id="SM00487">
    <property type="entry name" value="DEXDc"/>
    <property type="match status" value="1"/>
</dbReference>
<dbReference type="SMART" id="SM00437">
    <property type="entry name" value="TOP1Ac"/>
    <property type="match status" value="1"/>
</dbReference>
<dbReference type="SMART" id="SM00436">
    <property type="entry name" value="TOP1Bc"/>
    <property type="match status" value="1"/>
</dbReference>
<dbReference type="SMART" id="SM00493">
    <property type="entry name" value="TOPRIM"/>
    <property type="match status" value="1"/>
</dbReference>
<dbReference type="SUPFAM" id="SSF52540">
    <property type="entry name" value="P-loop containing nucleoside triphosphate hydrolases"/>
    <property type="match status" value="2"/>
</dbReference>
<dbReference type="SUPFAM" id="SSF56712">
    <property type="entry name" value="Prokaryotic type I DNA topoisomerase"/>
    <property type="match status" value="1"/>
</dbReference>
<dbReference type="PROSITE" id="PS51192">
    <property type="entry name" value="HELICASE_ATP_BIND_1"/>
    <property type="match status" value="1"/>
</dbReference>
<dbReference type="PROSITE" id="PS52039">
    <property type="entry name" value="TOPO_IA_2"/>
    <property type="match status" value="1"/>
</dbReference>
<dbReference type="PROSITE" id="PS50880">
    <property type="entry name" value="TOPRIM"/>
    <property type="match status" value="1"/>
</dbReference>
<dbReference type="PROSITE" id="PS52037">
    <property type="entry name" value="ZF_RG_C"/>
    <property type="match status" value="1"/>
</dbReference>
<dbReference type="PROSITE" id="PS52036">
    <property type="entry name" value="ZF_RG_N"/>
    <property type="match status" value="1"/>
</dbReference>
<keyword id="KW-0067">ATP-binding</keyword>
<keyword id="KW-0963">Cytoplasm</keyword>
<keyword id="KW-0238">DNA-binding</keyword>
<keyword id="KW-0413">Isomerase</keyword>
<keyword id="KW-0460">Magnesium</keyword>
<keyword id="KW-0479">Metal-binding</keyword>
<keyword id="KW-0547">Nucleotide-binding</keyword>
<keyword id="KW-1185">Reference proteome</keyword>
<keyword id="KW-0677">Repeat</keyword>
<keyword id="KW-0799">Topoisomerase</keyword>
<keyword id="KW-0862">Zinc</keyword>
<keyword id="KW-0863">Zinc-finger</keyword>
<reference key="1">
    <citation type="journal article" date="2002" name="Genome Res.">
        <title>A complete sequence of the T. tengcongensis genome.</title>
        <authorList>
            <person name="Bao Q."/>
            <person name="Tian Y."/>
            <person name="Li W."/>
            <person name="Xu Z."/>
            <person name="Xuan Z."/>
            <person name="Hu S."/>
            <person name="Dong W."/>
            <person name="Yang J."/>
            <person name="Chen Y."/>
            <person name="Xue Y."/>
            <person name="Xu Y."/>
            <person name="Lai X."/>
            <person name="Huang L."/>
            <person name="Dong X."/>
            <person name="Ma Y."/>
            <person name="Ling L."/>
            <person name="Tan H."/>
            <person name="Chen R."/>
            <person name="Wang J."/>
            <person name="Yu J."/>
            <person name="Yang H."/>
        </authorList>
    </citation>
    <scope>NUCLEOTIDE SEQUENCE [LARGE SCALE GENOMIC DNA]</scope>
    <source>
        <strain>DSM 15242 / JCM 11007 / NBRC 100824 / MB4</strain>
    </source>
</reference>
<reference key="2">
    <citation type="journal article" date="2011" name="Extremophiles">
        <title>Functional evaluation of four putative DNA-binding regions in Thermoanaerobacter tengcongensis reverse gyrase.</title>
        <authorList>
            <person name="Li J."/>
            <person name="Liu J."/>
            <person name="Zhou J."/>
            <person name="Xiang H."/>
        </authorList>
    </citation>
    <scope>FUNCTION</scope>
    <scope>CATALYTIC ACTIVITY</scope>
    <scope>ACTIVE SITE</scope>
    <scope>BIOPHYSICOCHEMICAL PROPERTIES</scope>
    <scope>DNA-BINDING</scope>
    <scope>MUTAGENESIS OF 1-MET--CYS-34; 214-SER--LYS-267; 394-SER--TYR-477; 634-CYS--CYS-651 AND TYR-864</scope>
    <source>
        <strain>DSM 15242 / JCM 11007 / NBRC 100824 / MB4</strain>
    </source>
</reference>
<sequence length="1117" mass="128615">MALATGAKYYHSCINCGGINTDTRNEKGLPCEVCLPFEDGDVLKGLKLNNSLKGYEKYWNLNQQYKEFEEFFFSKINKKPTGYQRFWAKRLLLSKSFTLVAPTGVGKTTFGLISALWIAKKGGKVALVFPTVSLVEQAAKRLIEFSKEDEDVNILFYTSSLKKKEREKFEKNFSEGNYDILVISSQFISKRKEQLSQKVFDLVFVDDVDAVLKSSKNIDTLLNMIGISQKAIDSTLDNLKKGNNSDKIQIEEKAPKGRLIVSSATAKPKGIKPLLFRELLGFEIGRFTTSARNITNVRIKEKSLEKLLYIINLLKDGILLFVPTEEEGKEIANYLEEHGVKLGKTWEDFEKSFEKFKEGSLQLLCGIYSYYGKLVRGIDLPLRIKFAVFWGTPSFKFSTKLENAPRFILERNFQDYLENNPKLKAYFKDLQRLSTEKLRKSVEKYISPETWEKLIQKNFPTTKFDKEKNLIVIPDVYTYIQASGRTSRIFGTSLTKGISILFEEDDSLFELLKARLLYLTEEEWTEEGEIEHLVKEAEETRKAISTDSSSKDMKSRMIIVESPTKAQTISKFLEKSSTRRYGSLMVHESITQEGILLLTASKGHLYDLETKTGLHGVEINDGRFIPYYNSIKRCSSCGAQFTDELPRCPYCNSDKIDDKKKILEALRDIAMEVDEVIIATDPDVEGEKIGWDISQYIKPVNKNVQRIEMHEITKFGFDKAIRNRRNCDVNLVKSQIVRRIEDRWVGFELSLRLQKNFQNSNLSAGRVQSTVLGWILEKEIEHSKSKKTVTQFTLDNGFKFEVDGKIDVDEVEVEIVEEKEQALSPLPPFNTPSLLTAASQQFKLPVQQIMEILQTLFELGFITYHRTDSTRISSTGQKIARSYLEKIGKITLLSEREWGKEGAHEAIRPVKPISPEELSEFITEKIAAYLSPMHIKVYSLIFNRFMASQMTSPVVINQKILIKNGSFQVEREVPVKLQEEGWNIFNPITVYTPFEEKKYSVVSKRTYTTHTVPLFTQASLIEEMQKRNIGRPSTYAKIVDILFKRKYIIEDVYKRLRTTALGRKVYSYLSERYMNYINEETTRQLEKLMESVETGEKDYQSVLKNLYEELNEILIKN</sequence>